<feature type="chain" id="PRO_1000022536" description="Chorismate synthase">
    <location>
        <begin position="1"/>
        <end position="371"/>
    </location>
</feature>
<feature type="binding site" evidence="1">
    <location>
        <position position="48"/>
    </location>
    <ligand>
        <name>NADP(+)</name>
        <dbReference type="ChEBI" id="CHEBI:58349"/>
    </ligand>
</feature>
<feature type="binding site" evidence="1">
    <location>
        <position position="54"/>
    </location>
    <ligand>
        <name>NADP(+)</name>
        <dbReference type="ChEBI" id="CHEBI:58349"/>
    </ligand>
</feature>
<feature type="binding site" evidence="1">
    <location>
        <begin position="131"/>
        <end position="133"/>
    </location>
    <ligand>
        <name>FMN</name>
        <dbReference type="ChEBI" id="CHEBI:58210"/>
    </ligand>
</feature>
<feature type="binding site" evidence="1">
    <location>
        <begin position="245"/>
        <end position="246"/>
    </location>
    <ligand>
        <name>FMN</name>
        <dbReference type="ChEBI" id="CHEBI:58210"/>
    </ligand>
</feature>
<feature type="binding site" evidence="1">
    <location>
        <position position="290"/>
    </location>
    <ligand>
        <name>FMN</name>
        <dbReference type="ChEBI" id="CHEBI:58210"/>
    </ligand>
</feature>
<feature type="binding site" evidence="1">
    <location>
        <begin position="305"/>
        <end position="309"/>
    </location>
    <ligand>
        <name>FMN</name>
        <dbReference type="ChEBI" id="CHEBI:58210"/>
    </ligand>
</feature>
<feature type="binding site" evidence="1">
    <location>
        <position position="331"/>
    </location>
    <ligand>
        <name>FMN</name>
        <dbReference type="ChEBI" id="CHEBI:58210"/>
    </ligand>
</feature>
<accession>Q985Z4</accession>
<gene>
    <name evidence="1" type="primary">aroC</name>
    <name type="ordered locus">mlr7461</name>
</gene>
<name>AROC_RHILO</name>
<comment type="function">
    <text evidence="1">Catalyzes the anti-1,4-elimination of the C-3 phosphate and the C-6 proR hydrogen from 5-enolpyruvylshikimate-3-phosphate (EPSP) to yield chorismate, which is the branch point compound that serves as the starting substrate for the three terminal pathways of aromatic amino acid biosynthesis. This reaction introduces a second double bond into the aromatic ring system.</text>
</comment>
<comment type="catalytic activity">
    <reaction evidence="1">
        <text>5-O-(1-carboxyvinyl)-3-phosphoshikimate = chorismate + phosphate</text>
        <dbReference type="Rhea" id="RHEA:21020"/>
        <dbReference type="ChEBI" id="CHEBI:29748"/>
        <dbReference type="ChEBI" id="CHEBI:43474"/>
        <dbReference type="ChEBI" id="CHEBI:57701"/>
        <dbReference type="EC" id="4.2.3.5"/>
    </reaction>
</comment>
<comment type="cofactor">
    <cofactor evidence="1">
        <name>FMNH2</name>
        <dbReference type="ChEBI" id="CHEBI:57618"/>
    </cofactor>
    <text evidence="1">Reduced FMN (FMNH(2)).</text>
</comment>
<comment type="pathway">
    <text evidence="1">Metabolic intermediate biosynthesis; chorismate biosynthesis; chorismate from D-erythrose 4-phosphate and phosphoenolpyruvate: step 7/7.</text>
</comment>
<comment type="subunit">
    <text evidence="1">Homotetramer.</text>
</comment>
<comment type="similarity">
    <text evidence="1">Belongs to the chorismate synthase family.</text>
</comment>
<keyword id="KW-0028">Amino-acid biosynthesis</keyword>
<keyword id="KW-0057">Aromatic amino acid biosynthesis</keyword>
<keyword id="KW-0274">FAD</keyword>
<keyword id="KW-0285">Flavoprotein</keyword>
<keyword id="KW-0288">FMN</keyword>
<keyword id="KW-0456">Lyase</keyword>
<keyword id="KW-0521">NADP</keyword>
<proteinExistence type="inferred from homology"/>
<sequence>MSHNTFGHLFRVTTWGESHGAALGCVVDGCPPGIRFTRDEIQAELDKRRPGQSRFVTQRREPDEVKVLSGFVLDEDGETMITTGTPVSMLIENVDQRSKDYGEIARQYRPGHADYTYDVKYGIRDYRGGGRSSARETAARVAAGALARKVVPGMVVRGALVSMGEKSIDRANWNWNFIGDAENPFFTPDPASVPVFTQYLDGIRKAGSSVGAVIEIVADGVPPGLGAPIYAKLDQDIASGLMSINAVKGVEIGNGFEAARITGEQNADEMRIGNDGKPVFLSNNAGGILGGISTGQAIVARFAVKPTSSILTPRKSIDKDGNDVEVMTKGRHDPCVGIRAVPIGEAMVACAIADHYLRHRGQTGKGIGSRE</sequence>
<reference key="1">
    <citation type="journal article" date="2000" name="DNA Res.">
        <title>Complete genome structure of the nitrogen-fixing symbiotic bacterium Mesorhizobium loti.</title>
        <authorList>
            <person name="Kaneko T."/>
            <person name="Nakamura Y."/>
            <person name="Sato S."/>
            <person name="Asamizu E."/>
            <person name="Kato T."/>
            <person name="Sasamoto S."/>
            <person name="Watanabe A."/>
            <person name="Idesawa K."/>
            <person name="Ishikawa A."/>
            <person name="Kawashima K."/>
            <person name="Kimura T."/>
            <person name="Kishida Y."/>
            <person name="Kiyokawa C."/>
            <person name="Kohara M."/>
            <person name="Matsumoto M."/>
            <person name="Matsuno A."/>
            <person name="Mochizuki Y."/>
            <person name="Nakayama S."/>
            <person name="Nakazaki N."/>
            <person name="Shimpo S."/>
            <person name="Sugimoto M."/>
            <person name="Takeuchi C."/>
            <person name="Yamada M."/>
            <person name="Tabata S."/>
        </authorList>
    </citation>
    <scope>NUCLEOTIDE SEQUENCE [LARGE SCALE GENOMIC DNA]</scope>
    <source>
        <strain>LMG 29417 / CECT 9101 / MAFF 303099</strain>
    </source>
</reference>
<evidence type="ECO:0000255" key="1">
    <source>
        <dbReference type="HAMAP-Rule" id="MF_00300"/>
    </source>
</evidence>
<organism>
    <name type="scientific">Mesorhizobium japonicum (strain LMG 29417 / CECT 9101 / MAFF 303099)</name>
    <name type="common">Mesorhizobium loti (strain MAFF 303099)</name>
    <dbReference type="NCBI Taxonomy" id="266835"/>
    <lineage>
        <taxon>Bacteria</taxon>
        <taxon>Pseudomonadati</taxon>
        <taxon>Pseudomonadota</taxon>
        <taxon>Alphaproteobacteria</taxon>
        <taxon>Hyphomicrobiales</taxon>
        <taxon>Phyllobacteriaceae</taxon>
        <taxon>Mesorhizobium</taxon>
    </lineage>
</organism>
<protein>
    <recommendedName>
        <fullName evidence="1">Chorismate synthase</fullName>
        <shortName evidence="1">CS</shortName>
        <ecNumber evidence="1">4.2.3.5</ecNumber>
    </recommendedName>
    <alternativeName>
        <fullName evidence="1">5-enolpyruvylshikimate-3-phosphate phospholyase</fullName>
    </alternativeName>
</protein>
<dbReference type="EC" id="4.2.3.5" evidence="1"/>
<dbReference type="EMBL" id="BA000012">
    <property type="protein sequence ID" value="BAB53559.1"/>
    <property type="molecule type" value="Genomic_DNA"/>
</dbReference>
<dbReference type="RefSeq" id="WP_010914866.1">
    <property type="nucleotide sequence ID" value="NC_002678.2"/>
</dbReference>
<dbReference type="SMR" id="Q985Z4"/>
<dbReference type="GeneID" id="66685260"/>
<dbReference type="KEGG" id="mlo:mlr7461"/>
<dbReference type="eggNOG" id="COG0082">
    <property type="taxonomic scope" value="Bacteria"/>
</dbReference>
<dbReference type="HOGENOM" id="CLU_034547_0_0_5"/>
<dbReference type="UniPathway" id="UPA00053">
    <property type="reaction ID" value="UER00090"/>
</dbReference>
<dbReference type="Proteomes" id="UP000000552">
    <property type="component" value="Chromosome"/>
</dbReference>
<dbReference type="GO" id="GO:0005829">
    <property type="term" value="C:cytosol"/>
    <property type="evidence" value="ECO:0007669"/>
    <property type="project" value="TreeGrafter"/>
</dbReference>
<dbReference type="GO" id="GO:0004107">
    <property type="term" value="F:chorismate synthase activity"/>
    <property type="evidence" value="ECO:0007669"/>
    <property type="project" value="UniProtKB-UniRule"/>
</dbReference>
<dbReference type="GO" id="GO:0010181">
    <property type="term" value="F:FMN binding"/>
    <property type="evidence" value="ECO:0007669"/>
    <property type="project" value="TreeGrafter"/>
</dbReference>
<dbReference type="GO" id="GO:0008652">
    <property type="term" value="P:amino acid biosynthetic process"/>
    <property type="evidence" value="ECO:0007669"/>
    <property type="project" value="UniProtKB-KW"/>
</dbReference>
<dbReference type="GO" id="GO:0009073">
    <property type="term" value="P:aromatic amino acid family biosynthetic process"/>
    <property type="evidence" value="ECO:0007669"/>
    <property type="project" value="UniProtKB-KW"/>
</dbReference>
<dbReference type="GO" id="GO:0009423">
    <property type="term" value="P:chorismate biosynthetic process"/>
    <property type="evidence" value="ECO:0007669"/>
    <property type="project" value="UniProtKB-UniRule"/>
</dbReference>
<dbReference type="CDD" id="cd07304">
    <property type="entry name" value="Chorismate_synthase"/>
    <property type="match status" value="1"/>
</dbReference>
<dbReference type="Gene3D" id="3.60.150.10">
    <property type="entry name" value="Chorismate synthase AroC"/>
    <property type="match status" value="1"/>
</dbReference>
<dbReference type="HAMAP" id="MF_00300">
    <property type="entry name" value="Chorismate_synth"/>
    <property type="match status" value="1"/>
</dbReference>
<dbReference type="InterPro" id="IPR000453">
    <property type="entry name" value="Chorismate_synth"/>
</dbReference>
<dbReference type="InterPro" id="IPR035904">
    <property type="entry name" value="Chorismate_synth_AroC_sf"/>
</dbReference>
<dbReference type="InterPro" id="IPR020541">
    <property type="entry name" value="Chorismate_synthase_CS"/>
</dbReference>
<dbReference type="NCBIfam" id="TIGR00033">
    <property type="entry name" value="aroC"/>
    <property type="match status" value="1"/>
</dbReference>
<dbReference type="NCBIfam" id="NF003793">
    <property type="entry name" value="PRK05382.1"/>
    <property type="match status" value="1"/>
</dbReference>
<dbReference type="PANTHER" id="PTHR21085">
    <property type="entry name" value="CHORISMATE SYNTHASE"/>
    <property type="match status" value="1"/>
</dbReference>
<dbReference type="PANTHER" id="PTHR21085:SF0">
    <property type="entry name" value="CHORISMATE SYNTHASE"/>
    <property type="match status" value="1"/>
</dbReference>
<dbReference type="Pfam" id="PF01264">
    <property type="entry name" value="Chorismate_synt"/>
    <property type="match status" value="1"/>
</dbReference>
<dbReference type="PIRSF" id="PIRSF001456">
    <property type="entry name" value="Chorismate_synth"/>
    <property type="match status" value="1"/>
</dbReference>
<dbReference type="SUPFAM" id="SSF103263">
    <property type="entry name" value="Chorismate synthase, AroC"/>
    <property type="match status" value="1"/>
</dbReference>
<dbReference type="PROSITE" id="PS00787">
    <property type="entry name" value="CHORISMATE_SYNTHASE_1"/>
    <property type="match status" value="1"/>
</dbReference>
<dbReference type="PROSITE" id="PS00788">
    <property type="entry name" value="CHORISMATE_SYNTHASE_2"/>
    <property type="match status" value="1"/>
</dbReference>
<dbReference type="PROSITE" id="PS00789">
    <property type="entry name" value="CHORISMATE_SYNTHASE_3"/>
    <property type="match status" value="1"/>
</dbReference>